<organism>
    <name type="scientific">Leptospira borgpetersenii serovar Hardjo-bovis (strain JB197)</name>
    <dbReference type="NCBI Taxonomy" id="355277"/>
    <lineage>
        <taxon>Bacteria</taxon>
        <taxon>Pseudomonadati</taxon>
        <taxon>Spirochaetota</taxon>
        <taxon>Spirochaetia</taxon>
        <taxon>Leptospirales</taxon>
        <taxon>Leptospiraceae</taxon>
        <taxon>Leptospira</taxon>
    </lineage>
</organism>
<accession>Q04S01</accession>
<name>CH60_LEPBJ</name>
<proteinExistence type="inferred from homology"/>
<evidence type="ECO:0000255" key="1">
    <source>
        <dbReference type="HAMAP-Rule" id="MF_00600"/>
    </source>
</evidence>
<evidence type="ECO:0000256" key="2">
    <source>
        <dbReference type="SAM" id="MobiDB-lite"/>
    </source>
</evidence>
<keyword id="KW-0067">ATP-binding</keyword>
<keyword id="KW-0143">Chaperone</keyword>
<keyword id="KW-0963">Cytoplasm</keyword>
<keyword id="KW-0413">Isomerase</keyword>
<keyword id="KW-0547">Nucleotide-binding</keyword>
<sequence>MAKDIEYNETARRKLLEGVNKLANAVKVTLGPKGRNVVIDKKFGAPTITKDGVTVAKEIELEDALENMGAQMVKEVSTKTNDVAGDGTTTATILAQSIINEGLKNVTAGANPMSLKRGIDKAVTAAVESIRKRAVKIENKKDIANVASISANNDDTIGNLIADAMDKVGKDGVITVEEAKSIETTLDVVEGMQFDRGYISPYMVTDAESMVATLSDPYILIYDKKISSMKDLIHILEKVAQAGKPLVIISEEVEGEALATIVVNTLRKTISCVAVKAPGFGDRRKAMLEDIAILTGGQVISEDLGMKLENTTLQMLGRANKVTVDKENTTIIEGKGQTKEIQGRIGQIKKQIEDTTSEYDKEKLQERLAKLAGGVAVIHVGAATEVEMKEKKARVEDALSATRAAVEEGIVPGGGLTLLKAQEAVAALKLEGDEATGAKIIFRSLEEPIRMITNNAGLEGSVIVEHAKTKKGNEGFNALSMVWEDLVSAGVVDPAKVVRSALQNAASIGSMILTTEVTITDKPEKDAPNPMAGMGGGGMGGMGGMM</sequence>
<dbReference type="EC" id="5.6.1.7" evidence="1"/>
<dbReference type="EMBL" id="CP000350">
    <property type="protein sequence ID" value="ABJ76319.1"/>
    <property type="molecule type" value="Genomic_DNA"/>
</dbReference>
<dbReference type="RefSeq" id="WP_002730932.1">
    <property type="nucleotide sequence ID" value="NC_008510.1"/>
</dbReference>
<dbReference type="SMR" id="Q04S01"/>
<dbReference type="GeneID" id="61173742"/>
<dbReference type="KEGG" id="lbj:LBJ_1772"/>
<dbReference type="HOGENOM" id="CLU_016503_3_0_12"/>
<dbReference type="Proteomes" id="UP000000656">
    <property type="component" value="Chromosome 1"/>
</dbReference>
<dbReference type="GO" id="GO:0005737">
    <property type="term" value="C:cytoplasm"/>
    <property type="evidence" value="ECO:0007669"/>
    <property type="project" value="UniProtKB-SubCell"/>
</dbReference>
<dbReference type="GO" id="GO:0005524">
    <property type="term" value="F:ATP binding"/>
    <property type="evidence" value="ECO:0007669"/>
    <property type="project" value="UniProtKB-UniRule"/>
</dbReference>
<dbReference type="GO" id="GO:0140662">
    <property type="term" value="F:ATP-dependent protein folding chaperone"/>
    <property type="evidence" value="ECO:0007669"/>
    <property type="project" value="InterPro"/>
</dbReference>
<dbReference type="GO" id="GO:0016853">
    <property type="term" value="F:isomerase activity"/>
    <property type="evidence" value="ECO:0007669"/>
    <property type="project" value="UniProtKB-KW"/>
</dbReference>
<dbReference type="GO" id="GO:0051082">
    <property type="term" value="F:unfolded protein binding"/>
    <property type="evidence" value="ECO:0007669"/>
    <property type="project" value="UniProtKB-UniRule"/>
</dbReference>
<dbReference type="GO" id="GO:0042026">
    <property type="term" value="P:protein refolding"/>
    <property type="evidence" value="ECO:0007669"/>
    <property type="project" value="UniProtKB-UniRule"/>
</dbReference>
<dbReference type="CDD" id="cd03344">
    <property type="entry name" value="GroEL"/>
    <property type="match status" value="1"/>
</dbReference>
<dbReference type="FunFam" id="3.50.7.10:FF:000001">
    <property type="entry name" value="60 kDa chaperonin"/>
    <property type="match status" value="1"/>
</dbReference>
<dbReference type="Gene3D" id="3.50.7.10">
    <property type="entry name" value="GroEL"/>
    <property type="match status" value="1"/>
</dbReference>
<dbReference type="Gene3D" id="1.10.560.10">
    <property type="entry name" value="GroEL-like equatorial domain"/>
    <property type="match status" value="1"/>
</dbReference>
<dbReference type="Gene3D" id="3.30.260.10">
    <property type="entry name" value="TCP-1-like chaperonin intermediate domain"/>
    <property type="match status" value="1"/>
</dbReference>
<dbReference type="HAMAP" id="MF_00600">
    <property type="entry name" value="CH60"/>
    <property type="match status" value="1"/>
</dbReference>
<dbReference type="InterPro" id="IPR018370">
    <property type="entry name" value="Chaperonin_Cpn60_CS"/>
</dbReference>
<dbReference type="InterPro" id="IPR001844">
    <property type="entry name" value="Cpn60/GroEL"/>
</dbReference>
<dbReference type="InterPro" id="IPR002423">
    <property type="entry name" value="Cpn60/GroEL/TCP-1"/>
</dbReference>
<dbReference type="InterPro" id="IPR027409">
    <property type="entry name" value="GroEL-like_apical_dom_sf"/>
</dbReference>
<dbReference type="InterPro" id="IPR027413">
    <property type="entry name" value="GROEL-like_equatorial_sf"/>
</dbReference>
<dbReference type="InterPro" id="IPR027410">
    <property type="entry name" value="TCP-1-like_intermed_sf"/>
</dbReference>
<dbReference type="NCBIfam" id="TIGR02348">
    <property type="entry name" value="GroEL"/>
    <property type="match status" value="1"/>
</dbReference>
<dbReference type="NCBIfam" id="NF000592">
    <property type="entry name" value="PRK00013.1"/>
    <property type="match status" value="1"/>
</dbReference>
<dbReference type="NCBIfam" id="NF009487">
    <property type="entry name" value="PRK12849.1"/>
    <property type="match status" value="1"/>
</dbReference>
<dbReference type="NCBIfam" id="NF009488">
    <property type="entry name" value="PRK12850.1"/>
    <property type="match status" value="1"/>
</dbReference>
<dbReference type="NCBIfam" id="NF009489">
    <property type="entry name" value="PRK12851.1"/>
    <property type="match status" value="1"/>
</dbReference>
<dbReference type="PANTHER" id="PTHR45633">
    <property type="entry name" value="60 KDA HEAT SHOCK PROTEIN, MITOCHONDRIAL"/>
    <property type="match status" value="1"/>
</dbReference>
<dbReference type="Pfam" id="PF00118">
    <property type="entry name" value="Cpn60_TCP1"/>
    <property type="match status" value="1"/>
</dbReference>
<dbReference type="PRINTS" id="PR00298">
    <property type="entry name" value="CHAPERONIN60"/>
</dbReference>
<dbReference type="SUPFAM" id="SSF52029">
    <property type="entry name" value="GroEL apical domain-like"/>
    <property type="match status" value="1"/>
</dbReference>
<dbReference type="SUPFAM" id="SSF48592">
    <property type="entry name" value="GroEL equatorial domain-like"/>
    <property type="match status" value="1"/>
</dbReference>
<dbReference type="SUPFAM" id="SSF54849">
    <property type="entry name" value="GroEL-intermediate domain like"/>
    <property type="match status" value="1"/>
</dbReference>
<dbReference type="PROSITE" id="PS00296">
    <property type="entry name" value="CHAPERONINS_CPN60"/>
    <property type="match status" value="1"/>
</dbReference>
<feature type="chain" id="PRO_1000025803" description="Chaperonin GroEL">
    <location>
        <begin position="1"/>
        <end position="546"/>
    </location>
</feature>
<feature type="region of interest" description="Disordered" evidence="2">
    <location>
        <begin position="522"/>
        <end position="546"/>
    </location>
</feature>
<feature type="compositionally biased region" description="Gly residues" evidence="2">
    <location>
        <begin position="533"/>
        <end position="546"/>
    </location>
</feature>
<feature type="binding site" evidence="1">
    <location>
        <begin position="29"/>
        <end position="32"/>
    </location>
    <ligand>
        <name>ATP</name>
        <dbReference type="ChEBI" id="CHEBI:30616"/>
    </ligand>
</feature>
<feature type="binding site" evidence="1">
    <location>
        <position position="50"/>
    </location>
    <ligand>
        <name>ATP</name>
        <dbReference type="ChEBI" id="CHEBI:30616"/>
    </ligand>
</feature>
<feature type="binding site" evidence="1">
    <location>
        <begin position="86"/>
        <end position="90"/>
    </location>
    <ligand>
        <name>ATP</name>
        <dbReference type="ChEBI" id="CHEBI:30616"/>
    </ligand>
</feature>
<feature type="binding site" evidence="1">
    <location>
        <position position="414"/>
    </location>
    <ligand>
        <name>ATP</name>
        <dbReference type="ChEBI" id="CHEBI:30616"/>
    </ligand>
</feature>
<feature type="binding site" evidence="1">
    <location>
        <begin position="477"/>
        <end position="479"/>
    </location>
    <ligand>
        <name>ATP</name>
        <dbReference type="ChEBI" id="CHEBI:30616"/>
    </ligand>
</feature>
<feature type="binding site" evidence="1">
    <location>
        <position position="493"/>
    </location>
    <ligand>
        <name>ATP</name>
        <dbReference type="ChEBI" id="CHEBI:30616"/>
    </ligand>
</feature>
<gene>
    <name evidence="1" type="primary">groEL</name>
    <name evidence="1" type="synonym">groL</name>
    <name type="ordered locus">LBJ_1772</name>
</gene>
<reference key="1">
    <citation type="journal article" date="2006" name="Proc. Natl. Acad. Sci. U.S.A.">
        <title>Genome reduction in Leptospira borgpetersenii reflects limited transmission potential.</title>
        <authorList>
            <person name="Bulach D.M."/>
            <person name="Zuerner R.L."/>
            <person name="Wilson P."/>
            <person name="Seemann T."/>
            <person name="McGrath A."/>
            <person name="Cullen P.A."/>
            <person name="Davis J."/>
            <person name="Johnson M."/>
            <person name="Kuczek E."/>
            <person name="Alt D.P."/>
            <person name="Peterson-Burch B."/>
            <person name="Coppel R.L."/>
            <person name="Rood J.I."/>
            <person name="Davies J.K."/>
            <person name="Adler B."/>
        </authorList>
    </citation>
    <scope>NUCLEOTIDE SEQUENCE [LARGE SCALE GENOMIC DNA]</scope>
    <source>
        <strain>JB197</strain>
    </source>
</reference>
<protein>
    <recommendedName>
        <fullName evidence="1">Chaperonin GroEL</fullName>
        <ecNumber evidence="1">5.6.1.7</ecNumber>
    </recommendedName>
    <alternativeName>
        <fullName evidence="1">60 kDa chaperonin</fullName>
    </alternativeName>
    <alternativeName>
        <fullName evidence="1">Chaperonin-60</fullName>
        <shortName evidence="1">Cpn60</shortName>
    </alternativeName>
</protein>
<comment type="function">
    <text evidence="1">Together with its co-chaperonin GroES, plays an essential role in assisting protein folding. The GroEL-GroES system forms a nano-cage that allows encapsulation of the non-native substrate proteins and provides a physical environment optimized to promote and accelerate protein folding.</text>
</comment>
<comment type="catalytic activity">
    <reaction evidence="1">
        <text>ATP + H2O + a folded polypeptide = ADP + phosphate + an unfolded polypeptide.</text>
        <dbReference type="EC" id="5.6.1.7"/>
    </reaction>
</comment>
<comment type="subunit">
    <text evidence="1">Forms a cylinder of 14 subunits composed of two heptameric rings stacked back-to-back. Interacts with the co-chaperonin GroES.</text>
</comment>
<comment type="subcellular location">
    <subcellularLocation>
        <location evidence="1">Cytoplasm</location>
    </subcellularLocation>
</comment>
<comment type="similarity">
    <text evidence="1">Belongs to the chaperonin (HSP60) family.</text>
</comment>